<protein>
    <recommendedName>
        <fullName>Signal peptidase complex catalytic subunit SEC11</fullName>
        <ecNumber evidence="1">3.4.21.89</ecNumber>
    </recommendedName>
    <alternativeName>
        <fullName>Signal peptidase I</fullName>
    </alternativeName>
</protein>
<reference key="1">
    <citation type="journal article" date="2004" name="Nature">
        <title>Genome evolution in yeasts.</title>
        <authorList>
            <person name="Dujon B."/>
            <person name="Sherman D."/>
            <person name="Fischer G."/>
            <person name="Durrens P."/>
            <person name="Casaregola S."/>
            <person name="Lafontaine I."/>
            <person name="de Montigny J."/>
            <person name="Marck C."/>
            <person name="Neuveglise C."/>
            <person name="Talla E."/>
            <person name="Goffard N."/>
            <person name="Frangeul L."/>
            <person name="Aigle M."/>
            <person name="Anthouard V."/>
            <person name="Babour A."/>
            <person name="Barbe V."/>
            <person name="Barnay S."/>
            <person name="Blanchin S."/>
            <person name="Beckerich J.-M."/>
            <person name="Beyne E."/>
            <person name="Bleykasten C."/>
            <person name="Boisrame A."/>
            <person name="Boyer J."/>
            <person name="Cattolico L."/>
            <person name="Confanioleri F."/>
            <person name="de Daruvar A."/>
            <person name="Despons L."/>
            <person name="Fabre E."/>
            <person name="Fairhead C."/>
            <person name="Ferry-Dumazet H."/>
            <person name="Groppi A."/>
            <person name="Hantraye F."/>
            <person name="Hennequin C."/>
            <person name="Jauniaux N."/>
            <person name="Joyet P."/>
            <person name="Kachouri R."/>
            <person name="Kerrest A."/>
            <person name="Koszul R."/>
            <person name="Lemaire M."/>
            <person name="Lesur I."/>
            <person name="Ma L."/>
            <person name="Muller H."/>
            <person name="Nicaud J.-M."/>
            <person name="Nikolski M."/>
            <person name="Oztas S."/>
            <person name="Ozier-Kalogeropoulos O."/>
            <person name="Pellenz S."/>
            <person name="Potier S."/>
            <person name="Richard G.-F."/>
            <person name="Straub M.-L."/>
            <person name="Suleau A."/>
            <person name="Swennen D."/>
            <person name="Tekaia F."/>
            <person name="Wesolowski-Louvel M."/>
            <person name="Westhof E."/>
            <person name="Wirth B."/>
            <person name="Zeniou-Meyer M."/>
            <person name="Zivanovic Y."/>
            <person name="Bolotin-Fukuhara M."/>
            <person name="Thierry A."/>
            <person name="Bouchier C."/>
            <person name="Caudron B."/>
            <person name="Scarpelli C."/>
            <person name="Gaillardin C."/>
            <person name="Weissenbach J."/>
            <person name="Wincker P."/>
            <person name="Souciet J.-L."/>
        </authorList>
    </citation>
    <scope>NUCLEOTIDE SEQUENCE [LARGE SCALE GENOMIC DNA]</scope>
    <source>
        <strain>CLIB 122 / E 150</strain>
    </source>
</reference>
<dbReference type="EC" id="3.4.21.89" evidence="1"/>
<dbReference type="EMBL" id="CR382130">
    <property type="protein sequence ID" value="CAG80531.1"/>
    <property type="molecule type" value="Genomic_DNA"/>
</dbReference>
<dbReference type="RefSeq" id="XP_502343.1">
    <property type="nucleotide sequence ID" value="XM_502343.1"/>
</dbReference>
<dbReference type="SMR" id="Q6CAG9"/>
<dbReference type="FunCoup" id="Q6CAG9">
    <property type="interactions" value="681"/>
</dbReference>
<dbReference type="STRING" id="284591.Q6CAG9"/>
<dbReference type="MEROPS" id="S26.010"/>
<dbReference type="EnsemblFungi" id="CAG80531">
    <property type="protein sequence ID" value="CAG80531"/>
    <property type="gene ID" value="YALI0_D02849g"/>
</dbReference>
<dbReference type="KEGG" id="yli:2910545"/>
<dbReference type="VEuPathDB" id="FungiDB:YALI0_D02849g"/>
<dbReference type="HOGENOM" id="CLU_089996_0_0_1"/>
<dbReference type="InParanoid" id="Q6CAG9"/>
<dbReference type="OMA" id="ILMNEYP"/>
<dbReference type="OrthoDB" id="103925at4891"/>
<dbReference type="Proteomes" id="UP000001300">
    <property type="component" value="Chromosome D"/>
</dbReference>
<dbReference type="GO" id="GO:0005787">
    <property type="term" value="C:signal peptidase complex"/>
    <property type="evidence" value="ECO:0000318"/>
    <property type="project" value="GO_Central"/>
</dbReference>
<dbReference type="GO" id="GO:0008233">
    <property type="term" value="F:peptidase activity"/>
    <property type="evidence" value="ECO:0000318"/>
    <property type="project" value="GO_Central"/>
</dbReference>
<dbReference type="GO" id="GO:0004252">
    <property type="term" value="F:serine-type endopeptidase activity"/>
    <property type="evidence" value="ECO:0007669"/>
    <property type="project" value="UniProtKB-EC"/>
</dbReference>
<dbReference type="GO" id="GO:0045047">
    <property type="term" value="P:protein targeting to ER"/>
    <property type="evidence" value="ECO:0007669"/>
    <property type="project" value="EnsemblFungi"/>
</dbReference>
<dbReference type="GO" id="GO:0006465">
    <property type="term" value="P:signal peptide processing"/>
    <property type="evidence" value="ECO:0000318"/>
    <property type="project" value="GO_Central"/>
</dbReference>
<dbReference type="CDD" id="cd06530">
    <property type="entry name" value="S26_SPase_I"/>
    <property type="match status" value="1"/>
</dbReference>
<dbReference type="Gene3D" id="2.10.109.10">
    <property type="entry name" value="Umud Fragment, subunit A"/>
    <property type="match status" value="1"/>
</dbReference>
<dbReference type="InterPro" id="IPR036286">
    <property type="entry name" value="LexA/Signal_pep-like_sf"/>
</dbReference>
<dbReference type="InterPro" id="IPR015927">
    <property type="entry name" value="Peptidase_S24_S26A/B/C"/>
</dbReference>
<dbReference type="InterPro" id="IPR019533">
    <property type="entry name" value="Peptidase_S26"/>
</dbReference>
<dbReference type="InterPro" id="IPR001733">
    <property type="entry name" value="Peptidase_S26B"/>
</dbReference>
<dbReference type="NCBIfam" id="TIGR02228">
    <property type="entry name" value="sigpep_I_arch"/>
    <property type="match status" value="1"/>
</dbReference>
<dbReference type="PANTHER" id="PTHR10806">
    <property type="entry name" value="SIGNAL PEPTIDASE COMPLEX CATALYTIC SUBUNIT SEC11"/>
    <property type="match status" value="1"/>
</dbReference>
<dbReference type="PANTHER" id="PTHR10806:SF6">
    <property type="entry name" value="SIGNAL PEPTIDASE COMPLEX CATALYTIC SUBUNIT SEC11"/>
    <property type="match status" value="1"/>
</dbReference>
<dbReference type="Pfam" id="PF00717">
    <property type="entry name" value="Peptidase_S24"/>
    <property type="match status" value="1"/>
</dbReference>
<dbReference type="PRINTS" id="PR00728">
    <property type="entry name" value="SIGNALPTASE"/>
</dbReference>
<dbReference type="SUPFAM" id="SSF51306">
    <property type="entry name" value="LexA/Signal peptidase"/>
    <property type="match status" value="1"/>
</dbReference>
<dbReference type="PROSITE" id="PS00761">
    <property type="entry name" value="SPASE_I_3"/>
    <property type="match status" value="1"/>
</dbReference>
<name>SEC11_YARLI</name>
<comment type="function">
    <text evidence="1 2">Catalytic component of the signal peptidase complex (SPC) which catalyzes the cleavage of N-terminal signal sequences from nascent proteins as they are translocated into the lumen of the endoplasmic reticulum (By similarity). Specifically cleaves N-terminal signal peptides that contain a hydrophobic alpha-helix (h-region) shorter than 18-20 amino acids (By similarity).</text>
</comment>
<comment type="catalytic activity">
    <reaction evidence="1">
        <text>Cleavage of hydrophobic, N-terminal signal or leader sequences from secreted and periplasmic proteins.</text>
        <dbReference type="EC" id="3.4.21.89"/>
    </reaction>
</comment>
<comment type="subunit">
    <text evidence="1 2">Component of the signal peptidase complex (SPC) composed of a catalytic subunit SEC11 and three accessory subunits SPC1, SPC2 and SPC3 (By similarity). The complex induces a local thinning of the ER membrane which is used to measure the length of the signal peptide (SP) h-region of protein substrates. This ensures the selectivity of the complex towards h-regions shorter than 18-20 amino acids (By similarity). SPC associates with the translocon complex (By similarity).</text>
</comment>
<comment type="subcellular location">
    <subcellularLocation>
        <location evidence="1">Endoplasmic reticulum membrane</location>
        <topology evidence="1">Single-pass type II membrane protein</topology>
    </subcellularLocation>
</comment>
<comment type="domain">
    <text evidence="2">The C-terminal short (CTS) helix is essential for catalytic activity. It may be accommodated as a transmembrane helix in the thinned membrane environment of the complex, similarly to the signal peptide in the complex substrates.</text>
</comment>
<comment type="similarity">
    <text evidence="4">Belongs to the peptidase S26B family.</text>
</comment>
<feature type="chain" id="PRO_0000412372" description="Signal peptidase complex catalytic subunit SEC11">
    <location>
        <begin position="1"/>
        <end position="172"/>
    </location>
</feature>
<feature type="topological domain" description="Cytoplasmic" evidence="3">
    <location>
        <begin position="1"/>
        <end position="15"/>
    </location>
</feature>
<feature type="transmembrane region" description="Helical; Signal-anchor for type II membrane protein" evidence="3">
    <location>
        <begin position="16"/>
        <end position="36"/>
    </location>
</feature>
<feature type="topological domain" description="Lumenal" evidence="3">
    <location>
        <begin position="37"/>
        <end position="172"/>
    </location>
</feature>
<feature type="region of interest" description="C-terminal short (CTS) helix" evidence="2">
    <location>
        <begin position="158"/>
        <end position="169"/>
    </location>
</feature>
<feature type="active site" description="Charge relay system" evidence="1">
    <location>
        <position position="50"/>
    </location>
</feature>
<feature type="active site" description="Charge relay system" evidence="1">
    <location>
        <position position="89"/>
    </location>
</feature>
<feature type="active site" description="Charge relay system" evidence="1">
    <location>
        <position position="114"/>
    </location>
</feature>
<gene>
    <name type="primary">SEC11</name>
    <name type="ordered locus">YALI0D02849g</name>
</gene>
<evidence type="ECO:0000250" key="1">
    <source>
        <dbReference type="UniProtKB" id="P15367"/>
    </source>
</evidence>
<evidence type="ECO:0000250" key="2">
    <source>
        <dbReference type="UniProtKB" id="P67812"/>
    </source>
</evidence>
<evidence type="ECO:0000255" key="3"/>
<evidence type="ECO:0000305" key="4"/>
<proteinExistence type="inferred from homology"/>
<accession>Q6CAG9</accession>
<sequence length="172" mass="19076">MVNFGAQSIRQTLVQLLGFAAIFTSSYMFYKGLSIVANSESPLVVVLSGSMEPAYQRGDVLLLWNRQKHVDVGEVVVYNIDGRTTPIVHRVLRSHASDNKQLLLTKGDNNAVDDVSFYGGRNQYLDREKEVVGVVKGYLPLVGYITILLAENQYFKYGLLGITGLLAFIQGE</sequence>
<organism>
    <name type="scientific">Yarrowia lipolytica (strain CLIB 122 / E 150)</name>
    <name type="common">Yeast</name>
    <name type="synonym">Candida lipolytica</name>
    <dbReference type="NCBI Taxonomy" id="284591"/>
    <lineage>
        <taxon>Eukaryota</taxon>
        <taxon>Fungi</taxon>
        <taxon>Dikarya</taxon>
        <taxon>Ascomycota</taxon>
        <taxon>Saccharomycotina</taxon>
        <taxon>Dipodascomycetes</taxon>
        <taxon>Dipodascales</taxon>
        <taxon>Dipodascales incertae sedis</taxon>
        <taxon>Yarrowia</taxon>
    </lineage>
</organism>
<keyword id="KW-0256">Endoplasmic reticulum</keyword>
<keyword id="KW-0378">Hydrolase</keyword>
<keyword id="KW-0472">Membrane</keyword>
<keyword id="KW-0645">Protease</keyword>
<keyword id="KW-1185">Reference proteome</keyword>
<keyword id="KW-0735">Signal-anchor</keyword>
<keyword id="KW-0812">Transmembrane</keyword>
<keyword id="KW-1133">Transmembrane helix</keyword>